<name>GLO2_ENT38</name>
<reference key="1">
    <citation type="journal article" date="2010" name="PLoS Genet.">
        <title>Genome sequence of the plant growth promoting endophytic bacterium Enterobacter sp. 638.</title>
        <authorList>
            <person name="Taghavi S."/>
            <person name="van der Lelie D."/>
            <person name="Hoffman A."/>
            <person name="Zhang Y.B."/>
            <person name="Walla M.D."/>
            <person name="Vangronsveld J."/>
            <person name="Newman L."/>
            <person name="Monchy S."/>
        </authorList>
    </citation>
    <scope>NUCLEOTIDE SEQUENCE [LARGE SCALE GENOMIC DNA]</scope>
    <source>
        <strain>638</strain>
    </source>
</reference>
<protein>
    <recommendedName>
        <fullName evidence="1">Hydroxyacylglutathione hydrolase</fullName>
        <ecNumber evidence="1">3.1.2.6</ecNumber>
    </recommendedName>
    <alternativeName>
        <fullName evidence="1">Glyoxalase II</fullName>
        <shortName evidence="1">Glx II</shortName>
    </alternativeName>
</protein>
<organism>
    <name type="scientific">Enterobacter sp. (strain 638)</name>
    <dbReference type="NCBI Taxonomy" id="399742"/>
    <lineage>
        <taxon>Bacteria</taxon>
        <taxon>Pseudomonadati</taxon>
        <taxon>Pseudomonadota</taxon>
        <taxon>Gammaproteobacteria</taxon>
        <taxon>Enterobacterales</taxon>
        <taxon>Enterobacteriaceae</taxon>
        <taxon>Enterobacter</taxon>
    </lineage>
</organism>
<gene>
    <name evidence="1" type="primary">gloB</name>
    <name type="ordered locus">Ent638_0746</name>
</gene>
<dbReference type="EC" id="3.1.2.6" evidence="1"/>
<dbReference type="EMBL" id="CP000653">
    <property type="protein sequence ID" value="ABP59432.1"/>
    <property type="molecule type" value="Genomic_DNA"/>
</dbReference>
<dbReference type="RefSeq" id="WP_012016153.1">
    <property type="nucleotide sequence ID" value="NC_009436.1"/>
</dbReference>
<dbReference type="SMR" id="A4W6V2"/>
<dbReference type="STRING" id="399742.Ent638_0746"/>
<dbReference type="KEGG" id="ent:Ent638_0746"/>
<dbReference type="eggNOG" id="COG0491">
    <property type="taxonomic scope" value="Bacteria"/>
</dbReference>
<dbReference type="HOGENOM" id="CLU_030571_4_1_6"/>
<dbReference type="OrthoDB" id="9802248at2"/>
<dbReference type="UniPathway" id="UPA00619">
    <property type="reaction ID" value="UER00676"/>
</dbReference>
<dbReference type="Proteomes" id="UP000000230">
    <property type="component" value="Chromosome"/>
</dbReference>
<dbReference type="GO" id="GO:0004416">
    <property type="term" value="F:hydroxyacylglutathione hydrolase activity"/>
    <property type="evidence" value="ECO:0007669"/>
    <property type="project" value="UniProtKB-UniRule"/>
</dbReference>
<dbReference type="GO" id="GO:0046872">
    <property type="term" value="F:metal ion binding"/>
    <property type="evidence" value="ECO:0007669"/>
    <property type="project" value="UniProtKB-KW"/>
</dbReference>
<dbReference type="GO" id="GO:0019243">
    <property type="term" value="P:methylglyoxal catabolic process to D-lactate via S-lactoyl-glutathione"/>
    <property type="evidence" value="ECO:0007669"/>
    <property type="project" value="InterPro"/>
</dbReference>
<dbReference type="CDD" id="cd07723">
    <property type="entry name" value="hydroxyacylglutathione_hydrolase_MBL-fold"/>
    <property type="match status" value="1"/>
</dbReference>
<dbReference type="Gene3D" id="3.60.15.10">
    <property type="entry name" value="Ribonuclease Z/Hydroxyacylglutathione hydrolase-like"/>
    <property type="match status" value="1"/>
</dbReference>
<dbReference type="HAMAP" id="MF_01374">
    <property type="entry name" value="Glyoxalase_2"/>
    <property type="match status" value="1"/>
</dbReference>
<dbReference type="InterPro" id="IPR035680">
    <property type="entry name" value="Clx_II_MBL"/>
</dbReference>
<dbReference type="InterPro" id="IPR050110">
    <property type="entry name" value="Glyoxalase_II_hydrolase"/>
</dbReference>
<dbReference type="InterPro" id="IPR032282">
    <property type="entry name" value="HAGH_C"/>
</dbReference>
<dbReference type="InterPro" id="IPR017782">
    <property type="entry name" value="Hydroxyacylglutathione_Hdrlase"/>
</dbReference>
<dbReference type="InterPro" id="IPR001279">
    <property type="entry name" value="Metallo-B-lactamas"/>
</dbReference>
<dbReference type="InterPro" id="IPR036866">
    <property type="entry name" value="RibonucZ/Hydroxyglut_hydro"/>
</dbReference>
<dbReference type="NCBIfam" id="TIGR03413">
    <property type="entry name" value="GSH_gloB"/>
    <property type="match status" value="1"/>
</dbReference>
<dbReference type="NCBIfam" id="NF007597">
    <property type="entry name" value="PRK10241.1"/>
    <property type="match status" value="1"/>
</dbReference>
<dbReference type="PANTHER" id="PTHR43705">
    <property type="entry name" value="HYDROXYACYLGLUTATHIONE HYDROLASE"/>
    <property type="match status" value="1"/>
</dbReference>
<dbReference type="PANTHER" id="PTHR43705:SF1">
    <property type="entry name" value="HYDROXYACYLGLUTATHIONE HYDROLASE GLOB"/>
    <property type="match status" value="1"/>
</dbReference>
<dbReference type="Pfam" id="PF16123">
    <property type="entry name" value="HAGH_C"/>
    <property type="match status" value="1"/>
</dbReference>
<dbReference type="Pfam" id="PF00753">
    <property type="entry name" value="Lactamase_B"/>
    <property type="match status" value="1"/>
</dbReference>
<dbReference type="PIRSF" id="PIRSF005457">
    <property type="entry name" value="Glx"/>
    <property type="match status" value="1"/>
</dbReference>
<dbReference type="SMART" id="SM00849">
    <property type="entry name" value="Lactamase_B"/>
    <property type="match status" value="1"/>
</dbReference>
<dbReference type="SUPFAM" id="SSF56281">
    <property type="entry name" value="Metallo-hydrolase/oxidoreductase"/>
    <property type="match status" value="1"/>
</dbReference>
<feature type="chain" id="PRO_1000068214" description="Hydroxyacylglutathione hydrolase">
    <location>
        <begin position="1"/>
        <end position="251"/>
    </location>
</feature>
<feature type="binding site" evidence="1">
    <location>
        <position position="53"/>
    </location>
    <ligand>
        <name>Zn(2+)</name>
        <dbReference type="ChEBI" id="CHEBI:29105"/>
        <label>1</label>
    </ligand>
</feature>
<feature type="binding site" evidence="1">
    <location>
        <position position="55"/>
    </location>
    <ligand>
        <name>Zn(2+)</name>
        <dbReference type="ChEBI" id="CHEBI:29105"/>
        <label>1</label>
    </ligand>
</feature>
<feature type="binding site" evidence="1">
    <location>
        <position position="57"/>
    </location>
    <ligand>
        <name>Zn(2+)</name>
        <dbReference type="ChEBI" id="CHEBI:29105"/>
        <label>2</label>
    </ligand>
</feature>
<feature type="binding site" evidence="1">
    <location>
        <position position="58"/>
    </location>
    <ligand>
        <name>Zn(2+)</name>
        <dbReference type="ChEBI" id="CHEBI:29105"/>
        <label>2</label>
    </ligand>
</feature>
<feature type="binding site" evidence="1">
    <location>
        <position position="110"/>
    </location>
    <ligand>
        <name>Zn(2+)</name>
        <dbReference type="ChEBI" id="CHEBI:29105"/>
        <label>1</label>
    </ligand>
</feature>
<feature type="binding site" evidence="1">
    <location>
        <position position="127"/>
    </location>
    <ligand>
        <name>Zn(2+)</name>
        <dbReference type="ChEBI" id="CHEBI:29105"/>
        <label>1</label>
    </ligand>
</feature>
<feature type="binding site" evidence="1">
    <location>
        <position position="127"/>
    </location>
    <ligand>
        <name>Zn(2+)</name>
        <dbReference type="ChEBI" id="CHEBI:29105"/>
        <label>2</label>
    </ligand>
</feature>
<feature type="binding site" evidence="1">
    <location>
        <position position="165"/>
    </location>
    <ligand>
        <name>Zn(2+)</name>
        <dbReference type="ChEBI" id="CHEBI:29105"/>
        <label>2</label>
    </ligand>
</feature>
<evidence type="ECO:0000255" key="1">
    <source>
        <dbReference type="HAMAP-Rule" id="MF_01374"/>
    </source>
</evidence>
<accession>A4W6V2</accession>
<comment type="function">
    <text evidence="1">Thiolesterase that catalyzes the hydrolysis of S-D-lactoyl-glutathione to form glutathione and D-lactic acid.</text>
</comment>
<comment type="catalytic activity">
    <reaction evidence="1">
        <text>an S-(2-hydroxyacyl)glutathione + H2O = a 2-hydroxy carboxylate + glutathione + H(+)</text>
        <dbReference type="Rhea" id="RHEA:21864"/>
        <dbReference type="ChEBI" id="CHEBI:15377"/>
        <dbReference type="ChEBI" id="CHEBI:15378"/>
        <dbReference type="ChEBI" id="CHEBI:57925"/>
        <dbReference type="ChEBI" id="CHEBI:58896"/>
        <dbReference type="ChEBI" id="CHEBI:71261"/>
        <dbReference type="EC" id="3.1.2.6"/>
    </reaction>
</comment>
<comment type="cofactor">
    <cofactor evidence="1">
        <name>Zn(2+)</name>
        <dbReference type="ChEBI" id="CHEBI:29105"/>
    </cofactor>
    <text evidence="1">Binds 2 Zn(2+) ions per subunit.</text>
</comment>
<comment type="pathway">
    <text evidence="1">Secondary metabolite metabolism; methylglyoxal degradation; (R)-lactate from methylglyoxal: step 2/2.</text>
</comment>
<comment type="subunit">
    <text evidence="1">Monomer.</text>
</comment>
<comment type="similarity">
    <text evidence="1">Belongs to the metallo-beta-lactamase superfamily. Glyoxalase II family.</text>
</comment>
<proteinExistence type="inferred from homology"/>
<sequence>MNLISIPAFQDNYIWVLADDKDRCVIVDPGEAAPVLKAIEENGWQPEAILLTHHHNDHVGGVPALCAKFPHLEVYGPQETQNKGTTCVVDEGQNVLILEWEFSVFATPGHTSGHICFYSSPYLFCGDTMFSGGCGRLFEGTPEQMYQSFQKINALPEETIICCAHEYTLANMKFAASILPEDRAIQDYYHKVKELRAKNLSTLPVILKNEREINLFLRTDDIDLINKINQETKLQQPEQRFAWLRSKKDNF</sequence>
<keyword id="KW-0378">Hydrolase</keyword>
<keyword id="KW-0479">Metal-binding</keyword>
<keyword id="KW-0862">Zinc</keyword>